<protein>
    <recommendedName>
        <fullName evidence="1">Ribonuclease HII</fullName>
        <shortName evidence="1">RNase HII</shortName>
        <ecNumber evidence="1">3.1.26.4</ecNumber>
    </recommendedName>
</protein>
<feature type="chain" id="PRO_1000031113" description="Ribonuclease HII">
    <location>
        <begin position="1"/>
        <end position="196"/>
    </location>
</feature>
<feature type="domain" description="RNase H type-2" evidence="2">
    <location>
        <begin position="9"/>
        <end position="196"/>
    </location>
</feature>
<feature type="binding site" evidence="1">
    <location>
        <position position="15"/>
    </location>
    <ligand>
        <name>a divalent metal cation</name>
        <dbReference type="ChEBI" id="CHEBI:60240"/>
    </ligand>
</feature>
<feature type="binding site" evidence="1">
    <location>
        <position position="16"/>
    </location>
    <ligand>
        <name>a divalent metal cation</name>
        <dbReference type="ChEBI" id="CHEBI:60240"/>
    </ligand>
</feature>
<feature type="binding site" evidence="1">
    <location>
        <position position="107"/>
    </location>
    <ligand>
        <name>a divalent metal cation</name>
        <dbReference type="ChEBI" id="CHEBI:60240"/>
    </ligand>
</feature>
<name>RNH2_AERS4</name>
<dbReference type="EC" id="3.1.26.4" evidence="1"/>
<dbReference type="EMBL" id="CP000644">
    <property type="protein sequence ID" value="ABO91140.1"/>
    <property type="molecule type" value="Genomic_DNA"/>
</dbReference>
<dbReference type="SMR" id="A4SQG8"/>
<dbReference type="STRING" id="29491.GCA_000820065_03526"/>
<dbReference type="KEGG" id="asa:ASA_3146"/>
<dbReference type="eggNOG" id="COG0164">
    <property type="taxonomic scope" value="Bacteria"/>
</dbReference>
<dbReference type="HOGENOM" id="CLU_036532_3_2_6"/>
<dbReference type="Proteomes" id="UP000000225">
    <property type="component" value="Chromosome"/>
</dbReference>
<dbReference type="GO" id="GO:0005737">
    <property type="term" value="C:cytoplasm"/>
    <property type="evidence" value="ECO:0007669"/>
    <property type="project" value="UniProtKB-SubCell"/>
</dbReference>
<dbReference type="GO" id="GO:0032299">
    <property type="term" value="C:ribonuclease H2 complex"/>
    <property type="evidence" value="ECO:0007669"/>
    <property type="project" value="TreeGrafter"/>
</dbReference>
<dbReference type="GO" id="GO:0030145">
    <property type="term" value="F:manganese ion binding"/>
    <property type="evidence" value="ECO:0007669"/>
    <property type="project" value="UniProtKB-UniRule"/>
</dbReference>
<dbReference type="GO" id="GO:0003723">
    <property type="term" value="F:RNA binding"/>
    <property type="evidence" value="ECO:0007669"/>
    <property type="project" value="InterPro"/>
</dbReference>
<dbReference type="GO" id="GO:0004523">
    <property type="term" value="F:RNA-DNA hybrid ribonuclease activity"/>
    <property type="evidence" value="ECO:0007669"/>
    <property type="project" value="UniProtKB-UniRule"/>
</dbReference>
<dbReference type="GO" id="GO:0043137">
    <property type="term" value="P:DNA replication, removal of RNA primer"/>
    <property type="evidence" value="ECO:0007669"/>
    <property type="project" value="TreeGrafter"/>
</dbReference>
<dbReference type="GO" id="GO:0006298">
    <property type="term" value="P:mismatch repair"/>
    <property type="evidence" value="ECO:0007669"/>
    <property type="project" value="TreeGrafter"/>
</dbReference>
<dbReference type="CDD" id="cd07182">
    <property type="entry name" value="RNase_HII_bacteria_HII_like"/>
    <property type="match status" value="1"/>
</dbReference>
<dbReference type="FunFam" id="3.30.420.10:FF:000006">
    <property type="entry name" value="Ribonuclease HII"/>
    <property type="match status" value="1"/>
</dbReference>
<dbReference type="Gene3D" id="3.30.420.10">
    <property type="entry name" value="Ribonuclease H-like superfamily/Ribonuclease H"/>
    <property type="match status" value="1"/>
</dbReference>
<dbReference type="HAMAP" id="MF_00052_B">
    <property type="entry name" value="RNase_HII_B"/>
    <property type="match status" value="1"/>
</dbReference>
<dbReference type="InterPro" id="IPR022898">
    <property type="entry name" value="RNase_HII"/>
</dbReference>
<dbReference type="InterPro" id="IPR001352">
    <property type="entry name" value="RNase_HII/HIII"/>
</dbReference>
<dbReference type="InterPro" id="IPR024567">
    <property type="entry name" value="RNase_HII/HIII_dom"/>
</dbReference>
<dbReference type="InterPro" id="IPR012337">
    <property type="entry name" value="RNaseH-like_sf"/>
</dbReference>
<dbReference type="InterPro" id="IPR036397">
    <property type="entry name" value="RNaseH_sf"/>
</dbReference>
<dbReference type="NCBIfam" id="NF000595">
    <property type="entry name" value="PRK00015.1-3"/>
    <property type="match status" value="1"/>
</dbReference>
<dbReference type="NCBIfam" id="NF000596">
    <property type="entry name" value="PRK00015.1-4"/>
    <property type="match status" value="1"/>
</dbReference>
<dbReference type="PANTHER" id="PTHR10954">
    <property type="entry name" value="RIBONUCLEASE H2 SUBUNIT A"/>
    <property type="match status" value="1"/>
</dbReference>
<dbReference type="PANTHER" id="PTHR10954:SF18">
    <property type="entry name" value="RIBONUCLEASE HII"/>
    <property type="match status" value="1"/>
</dbReference>
<dbReference type="Pfam" id="PF01351">
    <property type="entry name" value="RNase_HII"/>
    <property type="match status" value="1"/>
</dbReference>
<dbReference type="SUPFAM" id="SSF53098">
    <property type="entry name" value="Ribonuclease H-like"/>
    <property type="match status" value="1"/>
</dbReference>
<dbReference type="PROSITE" id="PS51975">
    <property type="entry name" value="RNASE_H_2"/>
    <property type="match status" value="1"/>
</dbReference>
<evidence type="ECO:0000255" key="1">
    <source>
        <dbReference type="HAMAP-Rule" id="MF_00052"/>
    </source>
</evidence>
<evidence type="ECO:0000255" key="2">
    <source>
        <dbReference type="PROSITE-ProRule" id="PRU01319"/>
    </source>
</evidence>
<reference key="1">
    <citation type="journal article" date="2008" name="BMC Genomics">
        <title>The genome of Aeromonas salmonicida subsp. salmonicida A449: insights into the evolution of a fish pathogen.</title>
        <authorList>
            <person name="Reith M.E."/>
            <person name="Singh R.K."/>
            <person name="Curtis B."/>
            <person name="Boyd J.M."/>
            <person name="Bouevitch A."/>
            <person name="Kimball J."/>
            <person name="Munholland J."/>
            <person name="Murphy C."/>
            <person name="Sarty D."/>
            <person name="Williams J."/>
            <person name="Nash J.H."/>
            <person name="Johnson S.C."/>
            <person name="Brown L.L."/>
        </authorList>
    </citation>
    <scope>NUCLEOTIDE SEQUENCE [LARGE SCALE GENOMIC DNA]</scope>
    <source>
        <strain>A449</strain>
    </source>
</reference>
<sequence>MMIDIPEDKLVAGVDEVGRGPLVGDVVTAAVILDPANPITGLADSKKLSEKKRLALFDEIKQKALAWAIGRASPEEIDELNILHATMLAMQRAVAGLSITPELVFIDGNRCPSLPMEARAVVKGDSLVAAISAASILAKVTRDAEMTELDSRHPEYGFARHKGYPTPEHLAILAERGPLPAYRKSFKPVRHALGIE</sequence>
<proteinExistence type="inferred from homology"/>
<keyword id="KW-0963">Cytoplasm</keyword>
<keyword id="KW-0255">Endonuclease</keyword>
<keyword id="KW-0378">Hydrolase</keyword>
<keyword id="KW-0464">Manganese</keyword>
<keyword id="KW-0479">Metal-binding</keyword>
<keyword id="KW-0540">Nuclease</keyword>
<organism>
    <name type="scientific">Aeromonas salmonicida (strain A449)</name>
    <dbReference type="NCBI Taxonomy" id="382245"/>
    <lineage>
        <taxon>Bacteria</taxon>
        <taxon>Pseudomonadati</taxon>
        <taxon>Pseudomonadota</taxon>
        <taxon>Gammaproteobacteria</taxon>
        <taxon>Aeromonadales</taxon>
        <taxon>Aeromonadaceae</taxon>
        <taxon>Aeromonas</taxon>
    </lineage>
</organism>
<comment type="function">
    <text evidence="1">Endonuclease that specifically degrades the RNA of RNA-DNA hybrids.</text>
</comment>
<comment type="catalytic activity">
    <reaction evidence="1">
        <text>Endonucleolytic cleavage to 5'-phosphomonoester.</text>
        <dbReference type="EC" id="3.1.26.4"/>
    </reaction>
</comment>
<comment type="cofactor">
    <cofactor evidence="1">
        <name>Mn(2+)</name>
        <dbReference type="ChEBI" id="CHEBI:29035"/>
    </cofactor>
    <cofactor evidence="1">
        <name>Mg(2+)</name>
        <dbReference type="ChEBI" id="CHEBI:18420"/>
    </cofactor>
    <text evidence="1">Manganese or magnesium. Binds 1 divalent metal ion per monomer in the absence of substrate. May bind a second metal ion after substrate binding.</text>
</comment>
<comment type="subcellular location">
    <subcellularLocation>
        <location evidence="1">Cytoplasm</location>
    </subcellularLocation>
</comment>
<comment type="similarity">
    <text evidence="1">Belongs to the RNase HII family.</text>
</comment>
<gene>
    <name evidence="1" type="primary">rnhB</name>
    <name type="ordered locus">ASA_3146</name>
</gene>
<accession>A4SQG8</accession>